<name>ID2_MOUSE</name>
<proteinExistence type="evidence at protein level"/>
<feature type="chain" id="PRO_0000127242" description="DNA-binding protein inhibitor ID-2">
    <location>
        <begin position="1"/>
        <end position="134"/>
    </location>
</feature>
<feature type="domain" description="bHLH" evidence="3">
    <location>
        <begin position="23"/>
        <end position="75"/>
    </location>
</feature>
<feature type="region of interest" description="Interaction with IFI204" evidence="4">
    <location>
        <begin position="30"/>
        <end position="83"/>
    </location>
</feature>
<feature type="short sequence motif" description="Nuclear export signal">
    <location>
        <begin position="106"/>
        <end position="115"/>
    </location>
</feature>
<feature type="modified residue" description="Phosphoserine" evidence="2">
    <location>
        <position position="14"/>
    </location>
</feature>
<feature type="modified residue" description="Phosphoserine" evidence="11">
    <location>
        <position position="25"/>
    </location>
</feature>
<feature type="sequence conflict" description="In Ref. 1; AAA79771." evidence="10" ref="1">
    <original>SPVR</original>
    <variation>RSGE</variation>
    <location>
        <begin position="5"/>
        <end position="8"/>
    </location>
</feature>
<feature type="sequence conflict" description="In Ref. 1; AAA79771." evidence="10" ref="1">
    <original>P</original>
    <variation>R</variation>
    <location>
        <position position="102"/>
    </location>
</feature>
<protein>
    <recommendedName>
        <fullName>DNA-binding protein inhibitor ID-2</fullName>
    </recommendedName>
    <alternativeName>
        <fullName>Inhibitor of DNA binding 2</fullName>
    </alternativeName>
    <alternativeName>
        <fullName>Inhibitor of differentiation 2</fullName>
    </alternativeName>
</protein>
<gene>
    <name type="primary">Id2</name>
    <name type="synonym">Id-2</name>
    <name type="synonym">Idb2</name>
</gene>
<evidence type="ECO:0000250" key="1">
    <source>
        <dbReference type="UniProtKB" id="P41137"/>
    </source>
</evidence>
<evidence type="ECO:0000250" key="2">
    <source>
        <dbReference type="UniProtKB" id="Q02363"/>
    </source>
</evidence>
<evidence type="ECO:0000255" key="3">
    <source>
        <dbReference type="PROSITE-ProRule" id="PRU00981"/>
    </source>
</evidence>
<evidence type="ECO:0000269" key="4">
    <source>
    </source>
</evidence>
<evidence type="ECO:0000269" key="5">
    <source>
    </source>
</evidence>
<evidence type="ECO:0000269" key="6">
    <source>
    </source>
</evidence>
<evidence type="ECO:0000269" key="7">
    <source>
    </source>
</evidence>
<evidence type="ECO:0000269" key="8">
    <source>
    </source>
</evidence>
<evidence type="ECO:0000269" key="9">
    <source>
    </source>
</evidence>
<evidence type="ECO:0000305" key="10"/>
<evidence type="ECO:0007744" key="11">
    <source>
    </source>
</evidence>
<comment type="function">
    <text evidence="6 7 8 9">Transcriptional regulator (lacking a basic DNA binding domain) which negatively regulates the basic helix-loop-helix (bHLH) transcription factors by forming heterodimers and inhibiting their DNA binding and transcriptional activity. Implicated in regulating a variety of cellular processes, including cellular growth, senescence, differentiation, apoptosis, angiogenesis, and neoplastic transformation. Inhibits skeletal muscle and cardiac myocyte differentiation. Regulates the circadian clock by repressing the transcriptional activator activity of the CLOCK-BMAL1 heterodimer. Restricts the CLOCK and BMAL1 localization to the cytoplasm. Plays a role in both the input and output pathways of the circadian clock: in the input component, is involved in modulating the magnitude of photic entrainment and in the output component, contributes to the regulation of a variety of liver clock-controlled genes involved in lipid metabolism.</text>
</comment>
<comment type="subunit">
    <text evidence="2">Interacts with GATA4 and NKX2-5 (By similarity). Interacts with NR0B2. Interacts with CLOCK and BMAL1 (By similarity). Interacts with IFI204 (By similarity). Interacts with NEDD9/HEF1. Interacts with ASB4; this interaction promotes ID2 proteasomal degradation (By similarity).</text>
</comment>
<comment type="interaction">
    <interactant intactId="EBI-309167">
        <id>P41136</id>
    </interactant>
    <interactant intactId="EBI-1213712">
        <id>Q9JKN5</id>
        <label>Olig1</label>
    </interactant>
    <organismsDiffer>false</organismsDiffer>
    <experiments>5</experiments>
</comment>
<comment type="interaction">
    <interactant intactId="EBI-309167">
        <id>P41136</id>
    </interactant>
    <interactant intactId="EBI-1213740">
        <id>Q9EQW6</id>
        <label>Olig2</label>
    </interactant>
    <organismsDiffer>false</organismsDiffer>
    <experiments>4</experiments>
</comment>
<comment type="interaction">
    <interactant intactId="EBI-309167">
        <id>P41136</id>
    </interactant>
    <interactant intactId="EBI-357187">
        <id>P62137</id>
        <label>Ppp1ca</label>
    </interactant>
    <organismsDiffer>false</organismsDiffer>
    <experiments>2</experiments>
</comment>
<comment type="interaction">
    <interactant intactId="EBI-309167">
        <id>P41136</id>
    </interactant>
    <interactant intactId="EBI-81370">
        <id>P15806</id>
        <label>Tcf3</label>
    </interactant>
    <organismsDiffer>false</organismsDiffer>
    <experiments>2</experiments>
</comment>
<comment type="interaction">
    <interactant intactId="EBI-309167">
        <id>P41136</id>
    </interactant>
    <interactant intactId="EBI-413585">
        <id>P15806-2</id>
        <label>Tcf3</label>
    </interactant>
    <organismsDiffer>false</organismsDiffer>
    <experiments>6</experiments>
</comment>
<comment type="subcellular location">
    <subcellularLocation>
        <location evidence="5 9">Cytoplasm</location>
    </subcellularLocation>
    <subcellularLocation>
        <location evidence="5">Nucleus</location>
    </subcellularLocation>
</comment>
<comment type="induction">
    <text evidence="7 8">Expressed in a circadian manner in the liver with peak levels seen at CT12 (at protein level). Expressed in a circadian manner in the suprachiasmatic nucleus (SCN) of the brain and heart with peak levels seen between CT16 and CT20 in the SCN and between CT8 and CT12 in the heart.</text>
</comment>
<comment type="domain">
    <text>The bHLH domain is essential for its repressor activity towards the CLOCK-BMAL1 heterodimer.</text>
</comment>
<comment type="PTM">
    <text evidence="2">Polyubiquitinated; which is favored by Ifi204 and leads to proteasomal degradation. Ubiquitinated in a ASB4-depedent manner, leading to proteasomal degradation.</text>
</comment>
<comment type="PTM">
    <text evidence="1">Phosphorylated in vitro by CDK1, PKA and PKC.</text>
</comment>
<comment type="disruption phenotype">
    <text evidence="7 8">Mice exhibit disrupted locomotor rhythms, reduced locomotor activity, enhanced phase shifts and an increased rate of entrainment when subjected to a large delay of the photoschedule. Show a reduction in lipid storage in the liver and white adipose tissue.</text>
</comment>
<comment type="sequence caution" evidence="10">
    <conflict type="erroneous initiation">
        <sequence resource="EMBL-CDS" id="AAA79771"/>
    </conflict>
    <text>Extended N-terminus.</text>
</comment>
<keyword id="KW-0090">Biological rhythms</keyword>
<keyword id="KW-0963">Cytoplasm</keyword>
<keyword id="KW-0217">Developmental protein</keyword>
<keyword id="KW-0539">Nucleus</keyword>
<keyword id="KW-0597">Phosphoprotein</keyword>
<keyword id="KW-1185">Reference proteome</keyword>
<keyword id="KW-0678">Repressor</keyword>
<keyword id="KW-0804">Transcription</keyword>
<keyword id="KW-0805">Transcription regulation</keyword>
<keyword id="KW-0832">Ubl conjugation</keyword>
<reference key="1">
    <citation type="journal article" date="1991" name="Mol. Cell. Biol.">
        <title>Id proteins Id1 and Id2 selectively inhibit DNA binding by one class of helix-loop-helix proteins.</title>
        <authorList>
            <person name="Sun X.H."/>
            <person name="Copeland N.G."/>
            <person name="Jenkins N.A."/>
            <person name="Baltimore D."/>
        </authorList>
    </citation>
    <scope>NUCLEOTIDE SEQUENCE [MRNA]</scope>
</reference>
<reference key="2">
    <citation type="journal article" date="1998" name="Gene">
        <title>The mouse Id2 and Id4 genes: structural organization and chromosomal localization.</title>
        <authorList>
            <person name="Mantani A."/>
            <person name="Hernandez M.-C."/>
            <person name="Kuo W.-L."/>
            <person name="Israel M.A."/>
        </authorList>
    </citation>
    <scope>NUCLEOTIDE SEQUENCE [GENOMIC DNA]</scope>
</reference>
<reference key="3">
    <citation type="journal article" date="2004" name="Genome Res.">
        <title>The status, quality, and expansion of the NIH full-length cDNA project: the Mammalian Gene Collection (MGC).</title>
        <authorList>
            <consortium name="The MGC Project Team"/>
        </authorList>
    </citation>
    <scope>NUCLEOTIDE SEQUENCE [LARGE SCALE MRNA]</scope>
    <source>
        <strain>FVB/N-3</strain>
        <tissue>Mammary gland</tissue>
    </source>
</reference>
<reference key="4">
    <citation type="journal article" date="2002" name="Mol. Cell. Biol.">
        <title>The MyoD-inducible p204 protein overcomes the inhibition of myoblast differentiation by Id proteins.</title>
        <authorList>
            <person name="Liu C.-J."/>
            <person name="Ding B."/>
            <person name="Wang H."/>
            <person name="Lengyel P."/>
        </authorList>
    </citation>
    <scope>INTERACTION WITH IFI204</scope>
</reference>
<reference key="5">
    <citation type="journal article" date="2005" name="J. Biol. Chem.">
        <title>Nucleo-cytoplasmic shuttling of Id2, a negative regulator of basic helix-loop-helix transcription factors.</title>
        <authorList>
            <person name="Kurooka H."/>
            <person name="Yokota Y."/>
        </authorList>
    </citation>
    <scope>SUBCELLULAR LOCATION</scope>
    <scope>NUCLEAR EXPORT SIGNAL</scope>
</reference>
<reference key="6">
    <citation type="journal article" date="2006" name="J. Biol. Chem.">
        <title>p204 protein overcomes the inhibition of the differentiation of P19 murine embryonal carcinoma cells to beating cardiac myocytes by Id proteins.</title>
        <authorList>
            <person name="Ding B."/>
            <person name="Liu C.-J."/>
            <person name="Huang Y."/>
            <person name="Yu J."/>
            <person name="Kong W."/>
            <person name="Lengyel P."/>
        </authorList>
    </citation>
    <scope>FUNCTION</scope>
    <scope>INTERACTION WITH GATA4 AND NKX2-5</scope>
</reference>
<reference key="7">
    <citation type="journal article" date="2009" name="Curr. Biol.">
        <title>A role for Id2 in regulating photic entrainment of the mammalian circadian system.</title>
        <authorList>
            <person name="Duffield G.E."/>
            <person name="Watson N.P."/>
            <person name="Mantani A."/>
            <person name="Peirson S.N."/>
            <person name="Robles-Murguia M."/>
            <person name="Loros J.J."/>
            <person name="Israel M.A."/>
            <person name="Dunlap J.C."/>
        </authorList>
    </citation>
    <scope>FUNCTION</scope>
    <scope>INDUCTION</scope>
    <scope>DISRUPTION PHENOTYPE</scope>
</reference>
<reference key="8">
    <citation type="journal article" date="2009" name="J. Biol. Chem.">
        <title>ID2 (inhibitor of DNA binding 2) is a rhythmically expressed transcriptional repressor required for circadian clock output in mouse liver.</title>
        <authorList>
            <person name="Hou T.Y."/>
            <person name="Ward S.M."/>
            <person name="Murad J.M."/>
            <person name="Watson N.P."/>
            <person name="Israel M.A."/>
            <person name="Duffield G.E."/>
        </authorList>
    </citation>
    <scope>FUNCTION</scope>
    <scope>INDUCTION</scope>
    <scope>DISRUPTION PHENOTYPE</scope>
</reference>
<reference key="9">
    <citation type="journal article" date="2010" name="Cell">
        <title>A tissue-specific atlas of mouse protein phosphorylation and expression.</title>
        <authorList>
            <person name="Huttlin E.L."/>
            <person name="Jedrychowski M.P."/>
            <person name="Elias J.E."/>
            <person name="Goswami T."/>
            <person name="Rad R."/>
            <person name="Beausoleil S.A."/>
            <person name="Villen J."/>
            <person name="Haas W."/>
            <person name="Sowa M.E."/>
            <person name="Gygi S.P."/>
        </authorList>
    </citation>
    <scope>PHOSPHORYLATION [LARGE SCALE ANALYSIS] AT SER-25</scope>
    <scope>IDENTIFICATION BY MASS SPECTROMETRY [LARGE SCALE ANALYSIS]</scope>
    <source>
        <tissue>Kidney</tissue>
        <tissue>Lung</tissue>
        <tissue>Spleen</tissue>
    </source>
</reference>
<reference key="10">
    <citation type="journal article" date="2010" name="J. Biol. Chem.">
        <title>The transcriptional repressor ID2 can interact with the canonical clock components CLOCK and BMAL1 and mediate inhibitory effects on mPer1 expression.</title>
        <authorList>
            <person name="Ward S.M."/>
            <person name="Fernando S.J."/>
            <person name="Hou T.Y."/>
            <person name="Duffield G.E."/>
        </authorList>
    </citation>
    <scope>FUNCTION</scope>
    <scope>SUBCELLULAR LOCATION</scope>
    <scope>BHLH DOMAIN</scope>
</reference>
<organism>
    <name type="scientific">Mus musculus</name>
    <name type="common">Mouse</name>
    <dbReference type="NCBI Taxonomy" id="10090"/>
    <lineage>
        <taxon>Eukaryota</taxon>
        <taxon>Metazoa</taxon>
        <taxon>Chordata</taxon>
        <taxon>Craniata</taxon>
        <taxon>Vertebrata</taxon>
        <taxon>Euteleostomi</taxon>
        <taxon>Mammalia</taxon>
        <taxon>Eutheria</taxon>
        <taxon>Euarchontoglires</taxon>
        <taxon>Glires</taxon>
        <taxon>Rodentia</taxon>
        <taxon>Myomorpha</taxon>
        <taxon>Muroidea</taxon>
        <taxon>Muridae</taxon>
        <taxon>Murinae</taxon>
        <taxon>Mus</taxon>
        <taxon>Mus</taxon>
    </lineage>
</organism>
<sequence>MKAFSPVRSVRKNSLSDHSLGISRSKTPVDDPMSLLYNMNDCYSKLKELVPSIPQNKKVTKMEILQHVIDYILDLQIALDSHPTIVSLHHQRPGQNQASRTPLTTLNTDISILSLQASEFPSELMSNDSKVLCG</sequence>
<dbReference type="EMBL" id="M69293">
    <property type="protein sequence ID" value="AAA79771.1"/>
    <property type="status" value="ALT_INIT"/>
    <property type="molecule type" value="mRNA"/>
</dbReference>
<dbReference type="EMBL" id="AF077860">
    <property type="protein sequence ID" value="AAD05214.1"/>
    <property type="molecule type" value="Genomic_DNA"/>
</dbReference>
<dbReference type="EMBL" id="BC006921">
    <property type="protein sequence ID" value="AAH06921.1"/>
    <property type="molecule type" value="mRNA"/>
</dbReference>
<dbReference type="EMBL" id="BC053699">
    <property type="protein sequence ID" value="AAH53699.1"/>
    <property type="molecule type" value="mRNA"/>
</dbReference>
<dbReference type="CCDS" id="CCDS25846.1"/>
<dbReference type="RefSeq" id="NP_034626.1">
    <property type="nucleotide sequence ID" value="NM_010496.4"/>
</dbReference>
<dbReference type="SMR" id="P41136"/>
<dbReference type="BioGRID" id="200506">
    <property type="interactions" value="16"/>
</dbReference>
<dbReference type="DIP" id="DIP-167N"/>
<dbReference type="FunCoup" id="P41136">
    <property type="interactions" value="1430"/>
</dbReference>
<dbReference type="IntAct" id="P41136">
    <property type="interactions" value="18"/>
</dbReference>
<dbReference type="MINT" id="P41136"/>
<dbReference type="STRING" id="10090.ENSMUSP00000152052"/>
<dbReference type="iPTMnet" id="P41136"/>
<dbReference type="PhosphoSitePlus" id="P41136"/>
<dbReference type="PaxDb" id="10090-ENSMUSP00000020974"/>
<dbReference type="PeptideAtlas" id="P41136"/>
<dbReference type="ProteomicsDB" id="269526"/>
<dbReference type="Pumba" id="P41136"/>
<dbReference type="Antibodypedia" id="12350">
    <property type="antibodies" value="454 antibodies from 38 providers"/>
</dbReference>
<dbReference type="DNASU" id="15902"/>
<dbReference type="Ensembl" id="ENSMUST00000020974.7">
    <property type="protein sequence ID" value="ENSMUSP00000020974.7"/>
    <property type="gene ID" value="ENSMUSG00000020644.10"/>
</dbReference>
<dbReference type="Ensembl" id="ENSMUST00000221761.2">
    <property type="protein sequence ID" value="ENSMUSP00000152052.2"/>
    <property type="gene ID" value="ENSMUSG00000020644.10"/>
</dbReference>
<dbReference type="GeneID" id="15902"/>
<dbReference type="KEGG" id="mmu:15902"/>
<dbReference type="UCSC" id="uc007nfe.2">
    <property type="organism name" value="mouse"/>
</dbReference>
<dbReference type="AGR" id="MGI:96397"/>
<dbReference type="CTD" id="3398"/>
<dbReference type="MGI" id="MGI:96397">
    <property type="gene designation" value="Id2"/>
</dbReference>
<dbReference type="VEuPathDB" id="HostDB:ENSMUSG00000020644"/>
<dbReference type="eggNOG" id="ENOG502RZP5">
    <property type="taxonomic scope" value="Eukaryota"/>
</dbReference>
<dbReference type="GeneTree" id="ENSGT00940000156464"/>
<dbReference type="HOGENOM" id="CLU_116790_2_1_1"/>
<dbReference type="InParanoid" id="P41136"/>
<dbReference type="OMA" id="FPTELMT"/>
<dbReference type="OrthoDB" id="13416at9989"/>
<dbReference type="PhylomeDB" id="P41136"/>
<dbReference type="TreeFam" id="TF326217"/>
<dbReference type="BioGRID-ORCS" id="15902">
    <property type="hits" value="1 hit in 78 CRISPR screens"/>
</dbReference>
<dbReference type="ChiTaRS" id="Id2">
    <property type="organism name" value="mouse"/>
</dbReference>
<dbReference type="PRO" id="PR:P41136"/>
<dbReference type="Proteomes" id="UP000000589">
    <property type="component" value="Chromosome 12"/>
</dbReference>
<dbReference type="RNAct" id="P41136">
    <property type="molecule type" value="protein"/>
</dbReference>
<dbReference type="Bgee" id="ENSMUSG00000020644">
    <property type="expression patterns" value="Expressed in vas deferens and 380 other cell types or tissues"/>
</dbReference>
<dbReference type="ExpressionAtlas" id="P41136">
    <property type="expression patterns" value="baseline and differential"/>
</dbReference>
<dbReference type="GO" id="GO:0005737">
    <property type="term" value="C:cytoplasm"/>
    <property type="evidence" value="ECO:0000314"/>
    <property type="project" value="UniProtKB"/>
</dbReference>
<dbReference type="GO" id="GO:0005829">
    <property type="term" value="C:cytosol"/>
    <property type="evidence" value="ECO:0007669"/>
    <property type="project" value="Ensembl"/>
</dbReference>
<dbReference type="GO" id="GO:0000791">
    <property type="term" value="C:euchromatin"/>
    <property type="evidence" value="ECO:0000314"/>
    <property type="project" value="ARUK-UCL"/>
</dbReference>
<dbReference type="GO" id="GO:0005634">
    <property type="term" value="C:nucleus"/>
    <property type="evidence" value="ECO:0000314"/>
    <property type="project" value="MGI"/>
</dbReference>
<dbReference type="GO" id="GO:0032991">
    <property type="term" value="C:protein-containing complex"/>
    <property type="evidence" value="ECO:0000314"/>
    <property type="project" value="UniProtKB"/>
</dbReference>
<dbReference type="GO" id="GO:0046983">
    <property type="term" value="F:protein dimerization activity"/>
    <property type="evidence" value="ECO:0007669"/>
    <property type="project" value="InterPro"/>
</dbReference>
<dbReference type="GO" id="GO:0061629">
    <property type="term" value="F:RNA polymerase II-specific DNA-binding transcription factor binding"/>
    <property type="evidence" value="ECO:0000353"/>
    <property type="project" value="ARUK-UCL"/>
</dbReference>
<dbReference type="GO" id="GO:0140416">
    <property type="term" value="F:transcription regulator inhibitor activity"/>
    <property type="evidence" value="ECO:0000314"/>
    <property type="project" value="UniProtKB"/>
</dbReference>
<dbReference type="GO" id="GO:0044325">
    <property type="term" value="F:transmembrane transporter binding"/>
    <property type="evidence" value="ECO:0007669"/>
    <property type="project" value="Ensembl"/>
</dbReference>
<dbReference type="GO" id="GO:0060612">
    <property type="term" value="P:adipose tissue development"/>
    <property type="evidence" value="ECO:0000315"/>
    <property type="project" value="MGI"/>
</dbReference>
<dbReference type="GO" id="GO:0008344">
    <property type="term" value="P:adult locomotory behavior"/>
    <property type="evidence" value="ECO:0000315"/>
    <property type="project" value="MGI"/>
</dbReference>
<dbReference type="GO" id="GO:0048708">
    <property type="term" value="P:astrocyte differentiation"/>
    <property type="evidence" value="ECO:0000315"/>
    <property type="project" value="MGI"/>
</dbReference>
<dbReference type="GO" id="GO:0030183">
    <property type="term" value="P:B cell differentiation"/>
    <property type="evidence" value="ECO:0000315"/>
    <property type="project" value="MGI"/>
</dbReference>
<dbReference type="GO" id="GO:0003166">
    <property type="term" value="P:bundle of His development"/>
    <property type="evidence" value="ECO:0000315"/>
    <property type="project" value="MGI"/>
</dbReference>
<dbReference type="GO" id="GO:0048468">
    <property type="term" value="P:cell development"/>
    <property type="evidence" value="ECO:0000316"/>
    <property type="project" value="MGI"/>
</dbReference>
<dbReference type="GO" id="GO:0048469">
    <property type="term" value="P:cell maturation"/>
    <property type="evidence" value="ECO:0000315"/>
    <property type="project" value="MGI"/>
</dbReference>
<dbReference type="GO" id="GO:0048667">
    <property type="term" value="P:cell morphogenesis involved in neuron differentiation"/>
    <property type="evidence" value="ECO:0000315"/>
    <property type="project" value="MGI"/>
</dbReference>
<dbReference type="GO" id="GO:0071285">
    <property type="term" value="P:cellular response to lithium ion"/>
    <property type="evidence" value="ECO:0000314"/>
    <property type="project" value="MGI"/>
</dbReference>
<dbReference type="GO" id="GO:0090398">
    <property type="term" value="P:cellular senescence"/>
    <property type="evidence" value="ECO:0000315"/>
    <property type="project" value="UniProtKB"/>
</dbReference>
<dbReference type="GO" id="GO:0032922">
    <property type="term" value="P:circadian regulation of gene expression"/>
    <property type="evidence" value="ECO:0000315"/>
    <property type="project" value="UniProtKB"/>
</dbReference>
<dbReference type="GO" id="GO:0007623">
    <property type="term" value="P:circadian rhythm"/>
    <property type="evidence" value="ECO:0000270"/>
    <property type="project" value="UniProtKB"/>
</dbReference>
<dbReference type="GO" id="GO:0071542">
    <property type="term" value="P:dopaminergic neuron differentiation"/>
    <property type="evidence" value="ECO:0000315"/>
    <property type="project" value="MGI"/>
</dbReference>
<dbReference type="GO" id="GO:0048557">
    <property type="term" value="P:embryonic digestive tract morphogenesis"/>
    <property type="evidence" value="ECO:0000314"/>
    <property type="project" value="UniProtKB"/>
</dbReference>
<dbReference type="GO" id="GO:0061031">
    <property type="term" value="P:endodermal digestive tract morphogenesis"/>
    <property type="evidence" value="ECO:0000270"/>
    <property type="project" value="UniProtKB"/>
</dbReference>
<dbReference type="GO" id="GO:0009649">
    <property type="term" value="P:entrainment of circadian clock"/>
    <property type="evidence" value="ECO:0000315"/>
    <property type="project" value="MGI"/>
</dbReference>
<dbReference type="GO" id="GO:0043153">
    <property type="term" value="P:entrainment of circadian clock by photoperiod"/>
    <property type="evidence" value="ECO:0000315"/>
    <property type="project" value="UniProtKB"/>
</dbReference>
<dbReference type="GO" id="GO:0043353">
    <property type="term" value="P:enucleate erythrocyte differentiation"/>
    <property type="evidence" value="ECO:0000316"/>
    <property type="project" value="MGI"/>
</dbReference>
<dbReference type="GO" id="GO:0061030">
    <property type="term" value="P:epithelial cell differentiation involved in mammary gland alveolus development"/>
    <property type="evidence" value="ECO:0000315"/>
    <property type="project" value="UniProtKB"/>
</dbReference>
<dbReference type="GO" id="GO:0030218">
    <property type="term" value="P:erythrocyte differentiation"/>
    <property type="evidence" value="ECO:0000315"/>
    <property type="project" value="MGI"/>
</dbReference>
<dbReference type="GO" id="GO:0007507">
    <property type="term" value="P:heart development"/>
    <property type="evidence" value="ECO:0000316"/>
    <property type="project" value="MGI"/>
</dbReference>
<dbReference type="GO" id="GO:0002521">
    <property type="term" value="P:leukocyte differentiation"/>
    <property type="evidence" value="ECO:0000315"/>
    <property type="project" value="MGI"/>
</dbReference>
<dbReference type="GO" id="GO:0045475">
    <property type="term" value="P:locomotor rhythm"/>
    <property type="evidence" value="ECO:0000315"/>
    <property type="project" value="UniProtKB"/>
</dbReference>
<dbReference type="GO" id="GO:0048535">
    <property type="term" value="P:lymph node development"/>
    <property type="evidence" value="ECO:0000304"/>
    <property type="project" value="MGI"/>
</dbReference>
<dbReference type="GO" id="GO:0060749">
    <property type="term" value="P:mammary gland alveolus development"/>
    <property type="evidence" value="ECO:0000315"/>
    <property type="project" value="UniProtKB"/>
</dbReference>
<dbReference type="GO" id="GO:0033598">
    <property type="term" value="P:mammary gland epithelial cell proliferation"/>
    <property type="evidence" value="ECO:0000315"/>
    <property type="project" value="UniProtKB"/>
</dbReference>
<dbReference type="GO" id="GO:0003149">
    <property type="term" value="P:membranous septum morphogenesis"/>
    <property type="evidence" value="ECO:0000315"/>
    <property type="project" value="BHF-UCL"/>
</dbReference>
<dbReference type="GO" id="GO:0001656">
    <property type="term" value="P:metanephros development"/>
    <property type="evidence" value="ECO:0000315"/>
    <property type="project" value="MGI"/>
</dbReference>
<dbReference type="GO" id="GO:0001779">
    <property type="term" value="P:natural killer cell differentiation"/>
    <property type="evidence" value="ECO:0000315"/>
    <property type="project" value="MGI"/>
</dbReference>
<dbReference type="GO" id="GO:0045578">
    <property type="term" value="P:negative regulation of B cell differentiation"/>
    <property type="evidence" value="ECO:0000315"/>
    <property type="project" value="MGI"/>
</dbReference>
<dbReference type="GO" id="GO:1904797">
    <property type="term" value="P:negative regulation of core promoter binding"/>
    <property type="evidence" value="ECO:0000314"/>
    <property type="project" value="UniProtKB"/>
</dbReference>
<dbReference type="GO" id="GO:0045892">
    <property type="term" value="P:negative regulation of DNA-templated transcription"/>
    <property type="evidence" value="ECO:0000314"/>
    <property type="project" value="UniProtKB"/>
</dbReference>
<dbReference type="GO" id="GO:1904339">
    <property type="term" value="P:negative regulation of dopaminergic neuron differentiation"/>
    <property type="evidence" value="ECO:0000315"/>
    <property type="project" value="MGI"/>
</dbReference>
<dbReference type="GO" id="GO:0010629">
    <property type="term" value="P:negative regulation of gene expression"/>
    <property type="evidence" value="ECO:0000315"/>
    <property type="project" value="UniProtKB"/>
</dbReference>
<dbReference type="GO" id="GO:0051148">
    <property type="term" value="P:negative regulation of muscle cell differentiation"/>
    <property type="evidence" value="ECO:0000314"/>
    <property type="project" value="ARUK-UCL"/>
</dbReference>
<dbReference type="GO" id="GO:0048715">
    <property type="term" value="P:negative regulation of oligodendrocyte differentiation"/>
    <property type="evidence" value="ECO:0000315"/>
    <property type="project" value="MGI"/>
</dbReference>
<dbReference type="GO" id="GO:0045668">
    <property type="term" value="P:negative regulation of osteoblast differentiation"/>
    <property type="evidence" value="ECO:0000316"/>
    <property type="project" value="MGI"/>
</dbReference>
<dbReference type="GO" id="GO:0000122">
    <property type="term" value="P:negative regulation of transcription by RNA polymerase II"/>
    <property type="evidence" value="ECO:0000314"/>
    <property type="project" value="ARUK-UCL"/>
</dbReference>
<dbReference type="GO" id="GO:0048663">
    <property type="term" value="P:neuron fate commitment"/>
    <property type="evidence" value="ECO:0000315"/>
    <property type="project" value="UniProtKB"/>
</dbReference>
<dbReference type="GO" id="GO:0021772">
    <property type="term" value="P:olfactory bulb development"/>
    <property type="evidence" value="ECO:0000315"/>
    <property type="project" value="MGI"/>
</dbReference>
<dbReference type="GO" id="GO:0014003">
    <property type="term" value="P:oligodendrocyte development"/>
    <property type="evidence" value="ECO:0000315"/>
    <property type="project" value="MGI"/>
</dbReference>
<dbReference type="GO" id="GO:0048709">
    <property type="term" value="P:oligodendrocyte differentiation"/>
    <property type="evidence" value="ECO:0000315"/>
    <property type="project" value="MGI"/>
</dbReference>
<dbReference type="GO" id="GO:0048541">
    <property type="term" value="P:Peyer's patch development"/>
    <property type="evidence" value="ECO:0000316"/>
    <property type="project" value="MGI"/>
</dbReference>
<dbReference type="GO" id="GO:0048711">
    <property type="term" value="P:positive regulation of astrocyte differentiation"/>
    <property type="evidence" value="ECO:0000315"/>
    <property type="project" value="MGI"/>
</dbReference>
<dbReference type="GO" id="GO:0045777">
    <property type="term" value="P:positive regulation of blood pressure"/>
    <property type="evidence" value="ECO:0000315"/>
    <property type="project" value="UniProtKB"/>
</dbReference>
<dbReference type="GO" id="GO:0045893">
    <property type="term" value="P:positive regulation of DNA-templated transcription"/>
    <property type="evidence" value="ECO:0000314"/>
    <property type="project" value="UniProtKB"/>
</dbReference>
<dbReference type="GO" id="GO:0045648">
    <property type="term" value="P:positive regulation of erythrocyte differentiation"/>
    <property type="evidence" value="ECO:0000315"/>
    <property type="project" value="MGI"/>
</dbReference>
<dbReference type="GO" id="GO:0045600">
    <property type="term" value="P:positive regulation of fat cell differentiation"/>
    <property type="evidence" value="ECO:0000315"/>
    <property type="project" value="MGI"/>
</dbReference>
<dbReference type="GO" id="GO:0010628">
    <property type="term" value="P:positive regulation of gene expression"/>
    <property type="evidence" value="ECO:0000315"/>
    <property type="project" value="UniProtKB"/>
</dbReference>
<dbReference type="GO" id="GO:0045651">
    <property type="term" value="P:positive regulation of macrophage differentiation"/>
    <property type="evidence" value="ECO:0000316"/>
    <property type="project" value="MGI"/>
</dbReference>
<dbReference type="GO" id="GO:0048661">
    <property type="term" value="P:positive regulation of smooth muscle cell proliferation"/>
    <property type="evidence" value="ECO:0000315"/>
    <property type="project" value="UniProtKB"/>
</dbReference>
<dbReference type="GO" id="GO:0042752">
    <property type="term" value="P:regulation of circadian rhythm"/>
    <property type="evidence" value="ECO:0000315"/>
    <property type="project" value="UniProtKB"/>
</dbReference>
<dbReference type="GO" id="GO:2000045">
    <property type="term" value="P:regulation of G1/S transition of mitotic cell cycle"/>
    <property type="evidence" value="ECO:0007669"/>
    <property type="project" value="Ensembl"/>
</dbReference>
<dbReference type="GO" id="GO:0010468">
    <property type="term" value="P:regulation of gene expression"/>
    <property type="evidence" value="ECO:0000270"/>
    <property type="project" value="UniProtKB"/>
</dbReference>
<dbReference type="GO" id="GO:0019216">
    <property type="term" value="P:regulation of lipid metabolic process"/>
    <property type="evidence" value="ECO:0000315"/>
    <property type="project" value="UniProtKB"/>
</dbReference>
<dbReference type="GO" id="GO:2000177">
    <property type="term" value="P:regulation of neural precursor cell proliferation"/>
    <property type="evidence" value="ECO:0000315"/>
    <property type="project" value="UniProtKB"/>
</dbReference>
<dbReference type="GO" id="GO:0045664">
    <property type="term" value="P:regulation of neuron differentiation"/>
    <property type="evidence" value="ECO:0000315"/>
    <property type="project" value="UniProtKB"/>
</dbReference>
<dbReference type="GO" id="GO:0001966">
    <property type="term" value="P:thigmotaxis"/>
    <property type="evidence" value="ECO:0000315"/>
    <property type="project" value="MGI"/>
</dbReference>
<dbReference type="GO" id="GO:0050872">
    <property type="term" value="P:white fat cell differentiation"/>
    <property type="evidence" value="ECO:0000315"/>
    <property type="project" value="MGI"/>
</dbReference>
<dbReference type="CDD" id="cd19692">
    <property type="entry name" value="bHLH_dnHLH_ID2"/>
    <property type="match status" value="1"/>
</dbReference>
<dbReference type="FunFam" id="4.10.280.10:FF:000055">
    <property type="entry name" value="DNA-binding protein inhibitor ID-2"/>
    <property type="match status" value="1"/>
</dbReference>
<dbReference type="Gene3D" id="4.10.280.10">
    <property type="entry name" value="Helix-loop-helix DNA-binding domain"/>
    <property type="match status" value="1"/>
</dbReference>
<dbReference type="InterPro" id="IPR011598">
    <property type="entry name" value="bHLH_dom"/>
</dbReference>
<dbReference type="InterPro" id="IPR026052">
    <property type="entry name" value="DNA-bd_prot-inh"/>
</dbReference>
<dbReference type="InterPro" id="IPR036638">
    <property type="entry name" value="HLH_DNA-bd_sf"/>
</dbReference>
<dbReference type="PANTHER" id="PTHR11723">
    <property type="entry name" value="DNA-BINDING PROTEIN INHIBITOR"/>
    <property type="match status" value="1"/>
</dbReference>
<dbReference type="PANTHER" id="PTHR11723:SF5">
    <property type="entry name" value="DNA-BINDING PROTEIN INHIBITOR ID-2"/>
    <property type="match status" value="1"/>
</dbReference>
<dbReference type="Pfam" id="PF00010">
    <property type="entry name" value="HLH"/>
    <property type="match status" value="1"/>
</dbReference>
<dbReference type="SMART" id="SM00353">
    <property type="entry name" value="HLH"/>
    <property type="match status" value="1"/>
</dbReference>
<dbReference type="SUPFAM" id="SSF47459">
    <property type="entry name" value="HLH, helix-loop-helix DNA-binding domain"/>
    <property type="match status" value="1"/>
</dbReference>
<dbReference type="PROSITE" id="PS50888">
    <property type="entry name" value="BHLH"/>
    <property type="match status" value="1"/>
</dbReference>
<accession>P41136</accession>
<accession>O88604</accession>